<gene>
    <name type="primary">hycB</name>
    <name type="ordered locus">SF2741</name>
    <name type="ordered locus">S2933</name>
</gene>
<feature type="chain" id="PRO_0000159265" description="Formate hydrogenlyase subunit 2">
    <location>
        <begin position="1"/>
        <end position="203"/>
    </location>
</feature>
<feature type="domain" description="4Fe-4S ferredoxin-type 1" evidence="2">
    <location>
        <begin position="2"/>
        <end position="32"/>
    </location>
</feature>
<feature type="domain" description="4Fe-4S ferredoxin-type 2" evidence="2">
    <location>
        <begin position="42"/>
        <end position="72"/>
    </location>
</feature>
<feature type="domain" description="4Fe-4S ferredoxin-type 3" evidence="2">
    <location>
        <begin position="73"/>
        <end position="102"/>
    </location>
</feature>
<feature type="domain" description="4Fe-4S ferredoxin-type 4" evidence="2">
    <location>
        <begin position="137"/>
        <end position="169"/>
    </location>
</feature>
<feature type="binding site" evidence="1">
    <location>
        <position position="12"/>
    </location>
    <ligand>
        <name>[4Fe-4S] cluster</name>
        <dbReference type="ChEBI" id="CHEBI:49883"/>
        <label>1</label>
    </ligand>
</feature>
<feature type="binding site" evidence="1">
    <location>
        <position position="15"/>
    </location>
    <ligand>
        <name>[4Fe-4S] cluster</name>
        <dbReference type="ChEBI" id="CHEBI:49883"/>
        <label>1</label>
    </ligand>
</feature>
<feature type="binding site" evidence="1">
    <location>
        <position position="18"/>
    </location>
    <ligand>
        <name>[4Fe-4S] cluster</name>
        <dbReference type="ChEBI" id="CHEBI:49883"/>
        <label>1</label>
    </ligand>
</feature>
<feature type="binding site" evidence="1">
    <location>
        <position position="22"/>
    </location>
    <ligand>
        <name>[4Fe-4S] cluster</name>
        <dbReference type="ChEBI" id="CHEBI:49883"/>
        <label>2</label>
    </ligand>
</feature>
<feature type="binding site" evidence="1">
    <location>
        <position position="51"/>
    </location>
    <ligand>
        <name>[4Fe-4S] cluster</name>
        <dbReference type="ChEBI" id="CHEBI:49883"/>
        <label>3</label>
    </ligand>
</feature>
<feature type="binding site" evidence="1">
    <location>
        <position position="54"/>
    </location>
    <ligand>
        <name>[4Fe-4S] cluster</name>
        <dbReference type="ChEBI" id="CHEBI:49883"/>
        <label>3</label>
    </ligand>
</feature>
<feature type="binding site" evidence="1">
    <location>
        <position position="59"/>
    </location>
    <ligand>
        <name>[4Fe-4S] cluster</name>
        <dbReference type="ChEBI" id="CHEBI:49883"/>
        <label>3</label>
    </ligand>
</feature>
<feature type="binding site" evidence="1">
    <location>
        <position position="63"/>
    </location>
    <ligand>
        <name>[4Fe-4S] cluster</name>
        <dbReference type="ChEBI" id="CHEBI:49883"/>
        <label>4</label>
    </ligand>
</feature>
<feature type="binding site" evidence="1">
    <location>
        <position position="82"/>
    </location>
    <ligand>
        <name>[4Fe-4S] cluster</name>
        <dbReference type="ChEBI" id="CHEBI:49883"/>
        <label>4</label>
    </ligand>
</feature>
<feature type="binding site" evidence="1">
    <location>
        <position position="85"/>
    </location>
    <ligand>
        <name>[4Fe-4S] cluster</name>
        <dbReference type="ChEBI" id="CHEBI:49883"/>
        <label>4</label>
    </ligand>
</feature>
<feature type="binding site" evidence="1">
    <location>
        <position position="88"/>
    </location>
    <ligand>
        <name>[4Fe-4S] cluster</name>
        <dbReference type="ChEBI" id="CHEBI:49883"/>
        <label>4</label>
    </ligand>
</feature>
<feature type="binding site" evidence="1">
    <location>
        <position position="92"/>
    </location>
    <ligand>
        <name>[4Fe-4S] cluster</name>
        <dbReference type="ChEBI" id="CHEBI:49883"/>
        <label>3</label>
    </ligand>
</feature>
<feature type="binding site" evidence="1">
    <location>
        <position position="143"/>
    </location>
    <ligand>
        <name>[4Fe-4S] cluster</name>
        <dbReference type="ChEBI" id="CHEBI:49883"/>
        <label>2</label>
    </ligand>
</feature>
<feature type="binding site" evidence="1">
    <location>
        <position position="146"/>
    </location>
    <ligand>
        <name>[4Fe-4S] cluster</name>
        <dbReference type="ChEBI" id="CHEBI:49883"/>
        <label>2</label>
    </ligand>
</feature>
<feature type="binding site" evidence="1">
    <location>
        <position position="155"/>
    </location>
    <ligand>
        <name>[4Fe-4S] cluster</name>
        <dbReference type="ChEBI" id="CHEBI:49883"/>
        <label>2</label>
    </ligand>
</feature>
<feature type="binding site" evidence="1">
    <location>
        <position position="159"/>
    </location>
    <ligand>
        <name>[4Fe-4S] cluster</name>
        <dbReference type="ChEBI" id="CHEBI:49883"/>
        <label>1</label>
    </ligand>
</feature>
<organism>
    <name type="scientific">Shigella flexneri</name>
    <dbReference type="NCBI Taxonomy" id="623"/>
    <lineage>
        <taxon>Bacteria</taxon>
        <taxon>Pseudomonadati</taxon>
        <taxon>Pseudomonadota</taxon>
        <taxon>Gammaproteobacteria</taxon>
        <taxon>Enterobacterales</taxon>
        <taxon>Enterobacteriaceae</taxon>
        <taxon>Shigella</taxon>
    </lineage>
</organism>
<evidence type="ECO:0000250" key="1"/>
<evidence type="ECO:0000255" key="2">
    <source>
        <dbReference type="PROSITE-ProRule" id="PRU00711"/>
    </source>
</evidence>
<sequence>MNRFVIADSTLCIGCHTCEAACSETHRQHGLQSMPRLRVMLNEKESAPQLCHHCEDAPCAVVCPVNAITRVDGAVQLNESLCVSCKLCGIACPFGAIEFSGSRPLDIPANANTPKAPPAPPAPARVSTLLDWVPGIRAIAVKCDLCSFDEQGPACVRMCPTKALHLVDNTDIARVSKRKRELTFNTDFGDLTLFQQAQSGEAK</sequence>
<dbReference type="EMBL" id="AE005674">
    <property type="protein sequence ID" value="AAN44232.1"/>
    <property type="molecule type" value="Genomic_DNA"/>
</dbReference>
<dbReference type="EMBL" id="AE014073">
    <property type="protein sequence ID" value="AAP18059.1"/>
    <property type="molecule type" value="Genomic_DNA"/>
</dbReference>
<dbReference type="RefSeq" id="NP_708525.1">
    <property type="nucleotide sequence ID" value="NC_004337.2"/>
</dbReference>
<dbReference type="RefSeq" id="WP_001079186.1">
    <property type="nucleotide sequence ID" value="NZ_WPGW01000014.1"/>
</dbReference>
<dbReference type="SMR" id="P0AAK3"/>
<dbReference type="STRING" id="198214.SF2741"/>
<dbReference type="TCDB" id="3.D.1.9.2">
    <property type="family name" value="the h+ or na+-translocating nadh dehydrogenase (ndh) family"/>
</dbReference>
<dbReference type="PaxDb" id="198214-SF2741"/>
<dbReference type="GeneID" id="1025711"/>
<dbReference type="GeneID" id="86860821"/>
<dbReference type="KEGG" id="sfl:SF2741"/>
<dbReference type="KEGG" id="sfx:S2933"/>
<dbReference type="PATRIC" id="fig|198214.7.peg.3264"/>
<dbReference type="HOGENOM" id="CLU_043374_3_0_6"/>
<dbReference type="Proteomes" id="UP000001006">
    <property type="component" value="Chromosome"/>
</dbReference>
<dbReference type="Proteomes" id="UP000002673">
    <property type="component" value="Chromosome"/>
</dbReference>
<dbReference type="GO" id="GO:0051539">
    <property type="term" value="F:4 iron, 4 sulfur cluster binding"/>
    <property type="evidence" value="ECO:0007669"/>
    <property type="project" value="UniProtKB-KW"/>
</dbReference>
<dbReference type="GO" id="GO:0046872">
    <property type="term" value="F:metal ion binding"/>
    <property type="evidence" value="ECO:0007669"/>
    <property type="project" value="UniProtKB-KW"/>
</dbReference>
<dbReference type="CDD" id="cd10554">
    <property type="entry name" value="HycB_like"/>
    <property type="match status" value="1"/>
</dbReference>
<dbReference type="FunFam" id="3.30.70.20:FF:000036">
    <property type="entry name" value="4Fe-4S dicluster domain-containing protein"/>
    <property type="match status" value="1"/>
</dbReference>
<dbReference type="Gene3D" id="3.30.70.20">
    <property type="match status" value="2"/>
</dbReference>
<dbReference type="InterPro" id="IPR017896">
    <property type="entry name" value="4Fe4S_Fe-S-bd"/>
</dbReference>
<dbReference type="InterPro" id="IPR017900">
    <property type="entry name" value="4Fe4S_Fe_S_CS"/>
</dbReference>
<dbReference type="InterPro" id="IPR050294">
    <property type="entry name" value="RnfB_subfamily"/>
</dbReference>
<dbReference type="PANTHER" id="PTHR42859:SF16">
    <property type="entry name" value="FORMATE HYDROGENLYASE SUBUNIT 2-RELATED"/>
    <property type="match status" value="1"/>
</dbReference>
<dbReference type="PANTHER" id="PTHR42859">
    <property type="entry name" value="OXIDOREDUCTASE"/>
    <property type="match status" value="1"/>
</dbReference>
<dbReference type="Pfam" id="PF13247">
    <property type="entry name" value="Fer4_11"/>
    <property type="match status" value="1"/>
</dbReference>
<dbReference type="SUPFAM" id="SSF54862">
    <property type="entry name" value="4Fe-4S ferredoxins"/>
    <property type="match status" value="1"/>
</dbReference>
<dbReference type="PROSITE" id="PS00198">
    <property type="entry name" value="4FE4S_FER_1"/>
    <property type="match status" value="1"/>
</dbReference>
<dbReference type="PROSITE" id="PS51379">
    <property type="entry name" value="4FE4S_FER_2"/>
    <property type="match status" value="4"/>
</dbReference>
<accession>P0AAK3</accession>
<accession>P16428</accession>
<accession>Q46883</accession>
<keyword id="KW-0004">4Fe-4S</keyword>
<keyword id="KW-0249">Electron transport</keyword>
<keyword id="KW-0408">Iron</keyword>
<keyword id="KW-0411">Iron-sulfur</keyword>
<keyword id="KW-0479">Metal-binding</keyword>
<keyword id="KW-1185">Reference proteome</keyword>
<keyword id="KW-0677">Repeat</keyword>
<keyword id="KW-0813">Transport</keyword>
<reference key="1">
    <citation type="journal article" date="2002" name="Nucleic Acids Res.">
        <title>Genome sequence of Shigella flexneri 2a: insights into pathogenicity through comparison with genomes of Escherichia coli K12 and O157.</title>
        <authorList>
            <person name="Jin Q."/>
            <person name="Yuan Z."/>
            <person name="Xu J."/>
            <person name="Wang Y."/>
            <person name="Shen Y."/>
            <person name="Lu W."/>
            <person name="Wang J."/>
            <person name="Liu H."/>
            <person name="Yang J."/>
            <person name="Yang F."/>
            <person name="Zhang X."/>
            <person name="Zhang J."/>
            <person name="Yang G."/>
            <person name="Wu H."/>
            <person name="Qu D."/>
            <person name="Dong J."/>
            <person name="Sun L."/>
            <person name="Xue Y."/>
            <person name="Zhao A."/>
            <person name="Gao Y."/>
            <person name="Zhu J."/>
            <person name="Kan B."/>
            <person name="Ding K."/>
            <person name="Chen S."/>
            <person name="Cheng H."/>
            <person name="Yao Z."/>
            <person name="He B."/>
            <person name="Chen R."/>
            <person name="Ma D."/>
            <person name="Qiang B."/>
            <person name="Wen Y."/>
            <person name="Hou Y."/>
            <person name="Yu J."/>
        </authorList>
    </citation>
    <scope>NUCLEOTIDE SEQUENCE [LARGE SCALE GENOMIC DNA]</scope>
    <source>
        <strain>301 / Serotype 2a</strain>
    </source>
</reference>
<reference key="2">
    <citation type="journal article" date="2003" name="Infect. Immun.">
        <title>Complete genome sequence and comparative genomics of Shigella flexneri serotype 2a strain 2457T.</title>
        <authorList>
            <person name="Wei J."/>
            <person name="Goldberg M.B."/>
            <person name="Burland V."/>
            <person name="Venkatesan M.M."/>
            <person name="Deng W."/>
            <person name="Fournier G."/>
            <person name="Mayhew G.F."/>
            <person name="Plunkett G. III"/>
            <person name="Rose D.J."/>
            <person name="Darling A."/>
            <person name="Mau B."/>
            <person name="Perna N.T."/>
            <person name="Payne S.M."/>
            <person name="Runyen-Janecky L.J."/>
            <person name="Zhou S."/>
            <person name="Schwartz D.C."/>
            <person name="Blattner F.R."/>
        </authorList>
    </citation>
    <scope>NUCLEOTIDE SEQUENCE [LARGE SCALE GENOMIC DNA]</scope>
    <source>
        <strain>ATCC 700930 / 2457T / Serotype 2a</strain>
    </source>
</reference>
<comment type="function">
    <text evidence="1">Probable electron transfer protein for hydrogenase 3.</text>
</comment>
<comment type="cofactor">
    <cofactor evidence="1">
        <name>[4Fe-4S] cluster</name>
        <dbReference type="ChEBI" id="CHEBI:49883"/>
    </cofactor>
    <text evidence="1">Binds 4 [4Fe-4S] clusters.</text>
</comment>
<comment type="subunit">
    <text evidence="1">FHL comprises of a formate dehydrogenase, unidentified electron carriers and a hydrogenase (isoenzyme 3). In this non-energy conserving pathway, molecular hydrogen and carbodioxide are released from formate (By similarity).</text>
</comment>
<name>HYCB_SHIFL</name>
<proteinExistence type="inferred from homology"/>
<protein>
    <recommendedName>
        <fullName>Formate hydrogenlyase subunit 2</fullName>
        <shortName>FHL subunit 2</shortName>
    </recommendedName>
    <alternativeName>
        <fullName>Hydrogenase-3 component B</fullName>
    </alternativeName>
</protein>